<proteinExistence type="inferred from homology"/>
<feature type="propeptide" id="PRO_0000031405" evidence="1">
    <location>
        <begin position="1"/>
        <end position="2"/>
    </location>
</feature>
<feature type="chain" id="PRO_0000031406" description="Ribulose bisphosphate carboxylase large chain">
    <location>
        <begin position="3"/>
        <end position="453" status="greater than"/>
    </location>
</feature>
<feature type="active site" description="Proton acceptor" evidence="1">
    <location>
        <position position="175"/>
    </location>
</feature>
<feature type="active site" description="Proton acceptor" evidence="1">
    <location>
        <position position="294"/>
    </location>
</feature>
<feature type="binding site" description="in homodimeric partner" evidence="1">
    <location>
        <position position="123"/>
    </location>
    <ligand>
        <name>substrate</name>
    </ligand>
</feature>
<feature type="binding site" evidence="1">
    <location>
        <position position="173"/>
    </location>
    <ligand>
        <name>substrate</name>
    </ligand>
</feature>
<feature type="binding site" evidence="1">
    <location>
        <position position="177"/>
    </location>
    <ligand>
        <name>substrate</name>
    </ligand>
</feature>
<feature type="binding site" description="via carbamate group" evidence="1">
    <location>
        <position position="201"/>
    </location>
    <ligand>
        <name>Mg(2+)</name>
        <dbReference type="ChEBI" id="CHEBI:18420"/>
    </ligand>
</feature>
<feature type="binding site" evidence="1">
    <location>
        <position position="203"/>
    </location>
    <ligand>
        <name>Mg(2+)</name>
        <dbReference type="ChEBI" id="CHEBI:18420"/>
    </ligand>
</feature>
<feature type="binding site" evidence="1">
    <location>
        <position position="204"/>
    </location>
    <ligand>
        <name>Mg(2+)</name>
        <dbReference type="ChEBI" id="CHEBI:18420"/>
    </ligand>
</feature>
<feature type="binding site" evidence="1">
    <location>
        <position position="295"/>
    </location>
    <ligand>
        <name>substrate</name>
    </ligand>
</feature>
<feature type="binding site" evidence="1">
    <location>
        <position position="327"/>
    </location>
    <ligand>
        <name>substrate</name>
    </ligand>
</feature>
<feature type="binding site" evidence="1">
    <location>
        <position position="379"/>
    </location>
    <ligand>
        <name>substrate</name>
    </ligand>
</feature>
<feature type="site" description="Transition state stabilizer" evidence="1">
    <location>
        <position position="334"/>
    </location>
</feature>
<feature type="modified residue" description="N-acetylproline" evidence="1">
    <location>
        <position position="3"/>
    </location>
</feature>
<feature type="modified residue" description="N6,N6,N6-trimethyllysine" evidence="1">
    <location>
        <position position="14"/>
    </location>
</feature>
<feature type="modified residue" description="N6-carboxylysine" evidence="1">
    <location>
        <position position="201"/>
    </location>
</feature>
<feature type="disulfide bond" description="Interchain; in linked form" evidence="1">
    <location>
        <position position="247"/>
    </location>
</feature>
<feature type="non-terminal residue">
    <location>
        <position position="453"/>
    </location>
</feature>
<sequence length="453" mass="50452">MSPQTETKAGVGFKAGVKEYKLTYYTPEYETKDTDILAAFRVTPQPGVPPEERGAAVAAESSTGTWTTVWTDGLTSLDRYKGRCYHIEPVPGEEEQFIAYVAYPLDLFEEGSVTNMFTSIVGNVFGFKALRALRLEDLRIPVAYVKTFQGPPHGIQVERDKLNKYGRPLLGCTIKPKLGLSAKNYGRAVYECLRGGLDFTKDDENVNSQPFMRWRDRFLFCAEAIYKSQAETGEIKGHYLNATAGTCEDMMKRAVFARELEVPIVMHDYLTGGFTANTTLSHYCRDNGLLLHIHRAMHAVIDRQKNHGMHFRVLAKALRMSGGDHIHSGTVVGKLEGERDITLGFVDLLRDDYIEKDRSRGIYFTQDWVSLPGVLPVASRGIHVWHMPALTEIFGDDSVLQFGGGTLGHPWGNAPGAVANRVALEACVKARNEGRDLAREGGEIIREACKWSP</sequence>
<comment type="function">
    <text evidence="1">RuBisCO catalyzes two reactions: the carboxylation of D-ribulose 1,5-bisphosphate, the primary event in carbon dioxide fixation, as well as the oxidative fragmentation of the pentose substrate in the photorespiration process. Both reactions occur simultaneously and in competition at the same active site.</text>
</comment>
<comment type="catalytic activity">
    <reaction evidence="1">
        <text>2 (2R)-3-phosphoglycerate + 2 H(+) = D-ribulose 1,5-bisphosphate + CO2 + H2O</text>
        <dbReference type="Rhea" id="RHEA:23124"/>
        <dbReference type="ChEBI" id="CHEBI:15377"/>
        <dbReference type="ChEBI" id="CHEBI:15378"/>
        <dbReference type="ChEBI" id="CHEBI:16526"/>
        <dbReference type="ChEBI" id="CHEBI:57870"/>
        <dbReference type="ChEBI" id="CHEBI:58272"/>
        <dbReference type="EC" id="4.1.1.39"/>
    </reaction>
</comment>
<comment type="catalytic activity">
    <reaction evidence="1">
        <text>D-ribulose 1,5-bisphosphate + O2 = 2-phosphoglycolate + (2R)-3-phosphoglycerate + 2 H(+)</text>
        <dbReference type="Rhea" id="RHEA:36631"/>
        <dbReference type="ChEBI" id="CHEBI:15378"/>
        <dbReference type="ChEBI" id="CHEBI:15379"/>
        <dbReference type="ChEBI" id="CHEBI:57870"/>
        <dbReference type="ChEBI" id="CHEBI:58033"/>
        <dbReference type="ChEBI" id="CHEBI:58272"/>
    </reaction>
</comment>
<comment type="cofactor">
    <cofactor evidence="1">
        <name>Mg(2+)</name>
        <dbReference type="ChEBI" id="CHEBI:18420"/>
    </cofactor>
    <text evidence="1">Binds 1 Mg(2+) ion per subunit.</text>
</comment>
<comment type="subunit">
    <text evidence="1">Heterohexadecamer of 8 large chains and 8 small chains; disulfide-linked. The disulfide link is formed within the large subunit homodimers.</text>
</comment>
<comment type="subcellular location">
    <subcellularLocation>
        <location>Plastid</location>
        <location>Chloroplast</location>
    </subcellularLocation>
</comment>
<comment type="PTM">
    <text evidence="1">The disulfide bond which can form in the large chain dimeric partners within the hexadecamer appears to be associated with oxidative stress and protein turnover.</text>
</comment>
<comment type="miscellaneous">
    <text evidence="1">The basic functional RuBisCO is composed of a large chain homodimer in a 'head-to-tail' conformation. In form I RuBisCO this homodimer is arranged in a barrel-like tetramer with the small subunits forming a tetrameric 'cap' on each end of the 'barrel'.</text>
</comment>
<comment type="similarity">
    <text evidence="1">Belongs to the RuBisCO large chain family. Type I subfamily.</text>
</comment>
<organism>
    <name type="scientific">Sherardia arvensis</name>
    <name type="common">Blue field-madder</name>
    <dbReference type="NCBI Taxonomy" id="29803"/>
    <lineage>
        <taxon>Eukaryota</taxon>
        <taxon>Viridiplantae</taxon>
        <taxon>Streptophyta</taxon>
        <taxon>Embryophyta</taxon>
        <taxon>Tracheophyta</taxon>
        <taxon>Spermatophyta</taxon>
        <taxon>Magnoliopsida</taxon>
        <taxon>eudicotyledons</taxon>
        <taxon>Gunneridae</taxon>
        <taxon>Pentapetalae</taxon>
        <taxon>asterids</taxon>
        <taxon>lamiids</taxon>
        <taxon>Gentianales</taxon>
        <taxon>Rubiaceae</taxon>
        <taxon>Rubioideae</taxon>
        <taxon>Rubieae</taxon>
        <taxon>Sherardia</taxon>
    </lineage>
</organism>
<keyword id="KW-0007">Acetylation</keyword>
<keyword id="KW-0113">Calvin cycle</keyword>
<keyword id="KW-0120">Carbon dioxide fixation</keyword>
<keyword id="KW-0150">Chloroplast</keyword>
<keyword id="KW-1015">Disulfide bond</keyword>
<keyword id="KW-0456">Lyase</keyword>
<keyword id="KW-0460">Magnesium</keyword>
<keyword id="KW-0479">Metal-binding</keyword>
<keyword id="KW-0488">Methylation</keyword>
<keyword id="KW-0503">Monooxygenase</keyword>
<keyword id="KW-0560">Oxidoreductase</keyword>
<keyword id="KW-0601">Photorespiration</keyword>
<keyword id="KW-0602">Photosynthesis</keyword>
<keyword id="KW-0934">Plastid</keyword>
<protein>
    <recommendedName>
        <fullName evidence="1">Ribulose bisphosphate carboxylase large chain</fullName>
        <shortName evidence="1">RuBisCO large subunit</shortName>
        <ecNumber evidence="1">4.1.1.39</ecNumber>
    </recommendedName>
</protein>
<accession>Q33062</accession>
<geneLocation type="chloroplast"/>
<reference key="1">
    <citation type="journal article" date="1995" name="J. Mol. Evol.">
        <title>Comparison of the evolution of ribulose-1, 5-biphosphate carboxylase (rbcL) and atpB-rbcL noncoding spacer sequences in a recent plant group, the tribe Rubieae (Rubiaceae).</title>
        <authorList>
            <person name="Manen J.F."/>
            <person name="Natali A."/>
        </authorList>
    </citation>
    <scope>NUCLEOTIDE SEQUENCE [GENOMIC DNA]</scope>
</reference>
<gene>
    <name evidence="1" type="primary">rbcL</name>
</gene>
<name>RBL_SHEAR</name>
<evidence type="ECO:0000255" key="1">
    <source>
        <dbReference type="HAMAP-Rule" id="MF_01338"/>
    </source>
</evidence>
<dbReference type="EC" id="4.1.1.39" evidence="1"/>
<dbReference type="EMBL" id="X81106">
    <property type="protein sequence ID" value="CAA57012.1"/>
    <property type="molecule type" value="Genomic_DNA"/>
</dbReference>
<dbReference type="PIR" id="S47237">
    <property type="entry name" value="S47237"/>
</dbReference>
<dbReference type="SMR" id="Q33062"/>
<dbReference type="GO" id="GO:0009507">
    <property type="term" value="C:chloroplast"/>
    <property type="evidence" value="ECO:0007669"/>
    <property type="project" value="UniProtKB-SubCell"/>
</dbReference>
<dbReference type="GO" id="GO:0000287">
    <property type="term" value="F:magnesium ion binding"/>
    <property type="evidence" value="ECO:0007669"/>
    <property type="project" value="InterPro"/>
</dbReference>
<dbReference type="GO" id="GO:0004497">
    <property type="term" value="F:monooxygenase activity"/>
    <property type="evidence" value="ECO:0007669"/>
    <property type="project" value="UniProtKB-KW"/>
</dbReference>
<dbReference type="GO" id="GO:0016984">
    <property type="term" value="F:ribulose-bisphosphate carboxylase activity"/>
    <property type="evidence" value="ECO:0007669"/>
    <property type="project" value="UniProtKB-EC"/>
</dbReference>
<dbReference type="GO" id="GO:0009853">
    <property type="term" value="P:photorespiration"/>
    <property type="evidence" value="ECO:0007669"/>
    <property type="project" value="UniProtKB-KW"/>
</dbReference>
<dbReference type="GO" id="GO:0019253">
    <property type="term" value="P:reductive pentose-phosphate cycle"/>
    <property type="evidence" value="ECO:0007669"/>
    <property type="project" value="UniProtKB-KW"/>
</dbReference>
<dbReference type="CDD" id="cd08212">
    <property type="entry name" value="RuBisCO_large_I"/>
    <property type="match status" value="1"/>
</dbReference>
<dbReference type="FunFam" id="3.20.20.110:FF:000003">
    <property type="entry name" value="Ribulose bisphosphate carboxylase large chain"/>
    <property type="match status" value="1"/>
</dbReference>
<dbReference type="FunFam" id="3.30.70.150:FF:000001">
    <property type="entry name" value="Ribulose bisphosphate carboxylase large chain"/>
    <property type="match status" value="1"/>
</dbReference>
<dbReference type="Gene3D" id="3.20.20.110">
    <property type="entry name" value="Ribulose bisphosphate carboxylase, large subunit, C-terminal domain"/>
    <property type="match status" value="1"/>
</dbReference>
<dbReference type="Gene3D" id="3.30.70.150">
    <property type="entry name" value="RuBisCO large subunit, N-terminal domain"/>
    <property type="match status" value="1"/>
</dbReference>
<dbReference type="HAMAP" id="MF_01338">
    <property type="entry name" value="RuBisCO_L_type1"/>
    <property type="match status" value="1"/>
</dbReference>
<dbReference type="InterPro" id="IPR033966">
    <property type="entry name" value="RuBisCO"/>
</dbReference>
<dbReference type="InterPro" id="IPR020878">
    <property type="entry name" value="RuBisCo_large_chain_AS"/>
</dbReference>
<dbReference type="InterPro" id="IPR000685">
    <property type="entry name" value="RuBisCO_lsu_C"/>
</dbReference>
<dbReference type="InterPro" id="IPR036376">
    <property type="entry name" value="RuBisCO_lsu_C_sf"/>
</dbReference>
<dbReference type="InterPro" id="IPR017443">
    <property type="entry name" value="RuBisCO_lsu_fd_N"/>
</dbReference>
<dbReference type="InterPro" id="IPR036422">
    <property type="entry name" value="RuBisCO_lsu_N_sf"/>
</dbReference>
<dbReference type="InterPro" id="IPR020888">
    <property type="entry name" value="RuBisCO_lsuI"/>
</dbReference>
<dbReference type="NCBIfam" id="NF003252">
    <property type="entry name" value="PRK04208.1"/>
    <property type="match status" value="1"/>
</dbReference>
<dbReference type="PANTHER" id="PTHR42704">
    <property type="entry name" value="RIBULOSE BISPHOSPHATE CARBOXYLASE"/>
    <property type="match status" value="1"/>
</dbReference>
<dbReference type="PANTHER" id="PTHR42704:SF15">
    <property type="entry name" value="RIBULOSE BISPHOSPHATE CARBOXYLASE LARGE CHAIN"/>
    <property type="match status" value="1"/>
</dbReference>
<dbReference type="Pfam" id="PF00016">
    <property type="entry name" value="RuBisCO_large"/>
    <property type="match status" value="1"/>
</dbReference>
<dbReference type="Pfam" id="PF02788">
    <property type="entry name" value="RuBisCO_large_N"/>
    <property type="match status" value="1"/>
</dbReference>
<dbReference type="SFLD" id="SFLDG01052">
    <property type="entry name" value="RuBisCO"/>
    <property type="match status" value="1"/>
</dbReference>
<dbReference type="SFLD" id="SFLDS00014">
    <property type="entry name" value="RuBisCO"/>
    <property type="match status" value="1"/>
</dbReference>
<dbReference type="SFLD" id="SFLDG00301">
    <property type="entry name" value="RuBisCO-like_proteins"/>
    <property type="match status" value="1"/>
</dbReference>
<dbReference type="SUPFAM" id="SSF51649">
    <property type="entry name" value="RuBisCo, C-terminal domain"/>
    <property type="match status" value="1"/>
</dbReference>
<dbReference type="SUPFAM" id="SSF54966">
    <property type="entry name" value="RuBisCO, large subunit, small (N-terminal) domain"/>
    <property type="match status" value="1"/>
</dbReference>
<dbReference type="PROSITE" id="PS00157">
    <property type="entry name" value="RUBISCO_LARGE"/>
    <property type="match status" value="1"/>
</dbReference>